<gene>
    <name evidence="1" type="primary">rplN</name>
    <name type="ordered locus">Ping_3514</name>
</gene>
<sequence>MIQMQSVLDVADNSGARRVMCIKVLGGSHRRYAAIGDIIKVTVKEAIPRGKVKKGDVHSAVVVRTRKGVRRPDGAVIRFDRNAAVMLNANNQPIGTRIFGPVTRELRNEKFMKIVSLAPEVL</sequence>
<evidence type="ECO:0000255" key="1">
    <source>
        <dbReference type="HAMAP-Rule" id="MF_01367"/>
    </source>
</evidence>
<evidence type="ECO:0000305" key="2"/>
<dbReference type="EMBL" id="CP000510">
    <property type="protein sequence ID" value="ABM05197.1"/>
    <property type="molecule type" value="Genomic_DNA"/>
</dbReference>
<dbReference type="RefSeq" id="WP_011771745.1">
    <property type="nucleotide sequence ID" value="NC_008709.1"/>
</dbReference>
<dbReference type="SMR" id="A1T0D2"/>
<dbReference type="STRING" id="357804.Ping_3514"/>
<dbReference type="KEGG" id="pin:Ping_3514"/>
<dbReference type="eggNOG" id="COG0093">
    <property type="taxonomic scope" value="Bacteria"/>
</dbReference>
<dbReference type="HOGENOM" id="CLU_095071_2_1_6"/>
<dbReference type="OrthoDB" id="9806379at2"/>
<dbReference type="Proteomes" id="UP000000639">
    <property type="component" value="Chromosome"/>
</dbReference>
<dbReference type="GO" id="GO:0022625">
    <property type="term" value="C:cytosolic large ribosomal subunit"/>
    <property type="evidence" value="ECO:0007669"/>
    <property type="project" value="TreeGrafter"/>
</dbReference>
<dbReference type="GO" id="GO:0070180">
    <property type="term" value="F:large ribosomal subunit rRNA binding"/>
    <property type="evidence" value="ECO:0007669"/>
    <property type="project" value="TreeGrafter"/>
</dbReference>
<dbReference type="GO" id="GO:0003735">
    <property type="term" value="F:structural constituent of ribosome"/>
    <property type="evidence" value="ECO:0007669"/>
    <property type="project" value="InterPro"/>
</dbReference>
<dbReference type="GO" id="GO:0006412">
    <property type="term" value="P:translation"/>
    <property type="evidence" value="ECO:0007669"/>
    <property type="project" value="UniProtKB-UniRule"/>
</dbReference>
<dbReference type="CDD" id="cd00337">
    <property type="entry name" value="Ribosomal_uL14"/>
    <property type="match status" value="1"/>
</dbReference>
<dbReference type="FunFam" id="2.40.150.20:FF:000001">
    <property type="entry name" value="50S ribosomal protein L14"/>
    <property type="match status" value="1"/>
</dbReference>
<dbReference type="Gene3D" id="2.40.150.20">
    <property type="entry name" value="Ribosomal protein L14"/>
    <property type="match status" value="1"/>
</dbReference>
<dbReference type="HAMAP" id="MF_01367">
    <property type="entry name" value="Ribosomal_uL14"/>
    <property type="match status" value="1"/>
</dbReference>
<dbReference type="InterPro" id="IPR000218">
    <property type="entry name" value="Ribosomal_uL14"/>
</dbReference>
<dbReference type="InterPro" id="IPR005745">
    <property type="entry name" value="Ribosomal_uL14_bac-type"/>
</dbReference>
<dbReference type="InterPro" id="IPR036853">
    <property type="entry name" value="Ribosomal_uL14_sf"/>
</dbReference>
<dbReference type="NCBIfam" id="TIGR01067">
    <property type="entry name" value="rplN_bact"/>
    <property type="match status" value="1"/>
</dbReference>
<dbReference type="PANTHER" id="PTHR11761">
    <property type="entry name" value="50S/60S RIBOSOMAL PROTEIN L14/L23"/>
    <property type="match status" value="1"/>
</dbReference>
<dbReference type="PANTHER" id="PTHR11761:SF3">
    <property type="entry name" value="LARGE RIBOSOMAL SUBUNIT PROTEIN UL14M"/>
    <property type="match status" value="1"/>
</dbReference>
<dbReference type="Pfam" id="PF00238">
    <property type="entry name" value="Ribosomal_L14"/>
    <property type="match status" value="1"/>
</dbReference>
<dbReference type="SMART" id="SM01374">
    <property type="entry name" value="Ribosomal_L14"/>
    <property type="match status" value="1"/>
</dbReference>
<dbReference type="SUPFAM" id="SSF50193">
    <property type="entry name" value="Ribosomal protein L14"/>
    <property type="match status" value="1"/>
</dbReference>
<accession>A1T0D2</accession>
<protein>
    <recommendedName>
        <fullName evidence="1">Large ribosomal subunit protein uL14</fullName>
    </recommendedName>
    <alternativeName>
        <fullName evidence="2">50S ribosomal protein L14</fullName>
    </alternativeName>
</protein>
<reference key="1">
    <citation type="journal article" date="2008" name="BMC Genomics">
        <title>Genomics of an extreme psychrophile, Psychromonas ingrahamii.</title>
        <authorList>
            <person name="Riley M."/>
            <person name="Staley J.T."/>
            <person name="Danchin A."/>
            <person name="Wang T.Z."/>
            <person name="Brettin T.S."/>
            <person name="Hauser L.J."/>
            <person name="Land M.L."/>
            <person name="Thompson L.S."/>
        </authorList>
    </citation>
    <scope>NUCLEOTIDE SEQUENCE [LARGE SCALE GENOMIC DNA]</scope>
    <source>
        <strain>DSM 17664 / CCUG 51855 / 37</strain>
    </source>
</reference>
<comment type="function">
    <text evidence="1">Binds to 23S rRNA. Forms part of two intersubunit bridges in the 70S ribosome.</text>
</comment>
<comment type="subunit">
    <text evidence="1">Part of the 50S ribosomal subunit. Forms a cluster with proteins L3 and L19. In the 70S ribosome, L14 and L19 interact and together make contacts with the 16S rRNA in bridges B5 and B8.</text>
</comment>
<comment type="similarity">
    <text evidence="1">Belongs to the universal ribosomal protein uL14 family.</text>
</comment>
<feature type="chain" id="PRO_1000055681" description="Large ribosomal subunit protein uL14">
    <location>
        <begin position="1"/>
        <end position="122"/>
    </location>
</feature>
<name>RL14_PSYIN</name>
<keyword id="KW-1185">Reference proteome</keyword>
<keyword id="KW-0687">Ribonucleoprotein</keyword>
<keyword id="KW-0689">Ribosomal protein</keyword>
<keyword id="KW-0694">RNA-binding</keyword>
<keyword id="KW-0699">rRNA-binding</keyword>
<proteinExistence type="inferred from homology"/>
<organism>
    <name type="scientific">Psychromonas ingrahamii (strain DSM 17664 / CCUG 51855 / 37)</name>
    <dbReference type="NCBI Taxonomy" id="357804"/>
    <lineage>
        <taxon>Bacteria</taxon>
        <taxon>Pseudomonadati</taxon>
        <taxon>Pseudomonadota</taxon>
        <taxon>Gammaproteobacteria</taxon>
        <taxon>Alteromonadales</taxon>
        <taxon>Psychromonadaceae</taxon>
        <taxon>Psychromonas</taxon>
    </lineage>
</organism>